<name>TRPA_PROMM</name>
<accession>Q7TV26</accession>
<reference key="1">
    <citation type="journal article" date="2003" name="Nature">
        <title>Genome divergence in two Prochlorococcus ecotypes reflects oceanic niche differentiation.</title>
        <authorList>
            <person name="Rocap G."/>
            <person name="Larimer F.W."/>
            <person name="Lamerdin J.E."/>
            <person name="Malfatti S."/>
            <person name="Chain P."/>
            <person name="Ahlgren N.A."/>
            <person name="Arellano A."/>
            <person name="Coleman M."/>
            <person name="Hauser L."/>
            <person name="Hess W.R."/>
            <person name="Johnson Z.I."/>
            <person name="Land M.L."/>
            <person name="Lindell D."/>
            <person name="Post A.F."/>
            <person name="Regala W."/>
            <person name="Shah M."/>
            <person name="Shaw S.L."/>
            <person name="Steglich C."/>
            <person name="Sullivan M.B."/>
            <person name="Ting C.S."/>
            <person name="Tolonen A."/>
            <person name="Webb E.A."/>
            <person name="Zinser E.R."/>
            <person name="Chisholm S.W."/>
        </authorList>
    </citation>
    <scope>NUCLEOTIDE SEQUENCE [LARGE SCALE GENOMIC DNA]</scope>
    <source>
        <strain>MIT 9313</strain>
    </source>
</reference>
<keyword id="KW-0028">Amino-acid biosynthesis</keyword>
<keyword id="KW-0057">Aromatic amino acid biosynthesis</keyword>
<keyword id="KW-0456">Lyase</keyword>
<keyword id="KW-1185">Reference proteome</keyword>
<keyword id="KW-0822">Tryptophan biosynthesis</keyword>
<evidence type="ECO:0000255" key="1">
    <source>
        <dbReference type="HAMAP-Rule" id="MF_00131"/>
    </source>
</evidence>
<dbReference type="EC" id="4.2.1.20" evidence="1"/>
<dbReference type="EMBL" id="BX548175">
    <property type="protein sequence ID" value="CAE20640.1"/>
    <property type="molecule type" value="Genomic_DNA"/>
</dbReference>
<dbReference type="RefSeq" id="WP_011129844.1">
    <property type="nucleotide sequence ID" value="NC_005071.1"/>
</dbReference>
<dbReference type="SMR" id="Q7TV26"/>
<dbReference type="KEGG" id="pmt:PMT_0465"/>
<dbReference type="eggNOG" id="COG0159">
    <property type="taxonomic scope" value="Bacteria"/>
</dbReference>
<dbReference type="HOGENOM" id="CLU_016734_0_2_3"/>
<dbReference type="OrthoDB" id="9804578at2"/>
<dbReference type="UniPathway" id="UPA00035">
    <property type="reaction ID" value="UER00044"/>
</dbReference>
<dbReference type="Proteomes" id="UP000001423">
    <property type="component" value="Chromosome"/>
</dbReference>
<dbReference type="GO" id="GO:0005829">
    <property type="term" value="C:cytosol"/>
    <property type="evidence" value="ECO:0007669"/>
    <property type="project" value="TreeGrafter"/>
</dbReference>
<dbReference type="GO" id="GO:0004834">
    <property type="term" value="F:tryptophan synthase activity"/>
    <property type="evidence" value="ECO:0007669"/>
    <property type="project" value="UniProtKB-UniRule"/>
</dbReference>
<dbReference type="CDD" id="cd04724">
    <property type="entry name" value="Tryptophan_synthase_alpha"/>
    <property type="match status" value="1"/>
</dbReference>
<dbReference type="FunFam" id="3.20.20.70:FF:000037">
    <property type="entry name" value="Tryptophan synthase alpha chain"/>
    <property type="match status" value="1"/>
</dbReference>
<dbReference type="Gene3D" id="3.20.20.70">
    <property type="entry name" value="Aldolase class I"/>
    <property type="match status" value="1"/>
</dbReference>
<dbReference type="HAMAP" id="MF_00131">
    <property type="entry name" value="Trp_synth_alpha"/>
    <property type="match status" value="1"/>
</dbReference>
<dbReference type="InterPro" id="IPR013785">
    <property type="entry name" value="Aldolase_TIM"/>
</dbReference>
<dbReference type="InterPro" id="IPR011060">
    <property type="entry name" value="RibuloseP-bd_barrel"/>
</dbReference>
<dbReference type="InterPro" id="IPR018204">
    <property type="entry name" value="Trp_synthase_alpha_AS"/>
</dbReference>
<dbReference type="InterPro" id="IPR002028">
    <property type="entry name" value="Trp_synthase_suA"/>
</dbReference>
<dbReference type="NCBIfam" id="TIGR00262">
    <property type="entry name" value="trpA"/>
    <property type="match status" value="1"/>
</dbReference>
<dbReference type="PANTHER" id="PTHR43406:SF1">
    <property type="entry name" value="TRYPTOPHAN SYNTHASE ALPHA CHAIN, CHLOROPLASTIC"/>
    <property type="match status" value="1"/>
</dbReference>
<dbReference type="PANTHER" id="PTHR43406">
    <property type="entry name" value="TRYPTOPHAN SYNTHASE, ALPHA CHAIN"/>
    <property type="match status" value="1"/>
</dbReference>
<dbReference type="Pfam" id="PF00290">
    <property type="entry name" value="Trp_syntA"/>
    <property type="match status" value="1"/>
</dbReference>
<dbReference type="SUPFAM" id="SSF51366">
    <property type="entry name" value="Ribulose-phoshate binding barrel"/>
    <property type="match status" value="1"/>
</dbReference>
<dbReference type="PROSITE" id="PS00167">
    <property type="entry name" value="TRP_SYNTHASE_ALPHA"/>
    <property type="match status" value="1"/>
</dbReference>
<gene>
    <name evidence="1" type="primary">trpA</name>
    <name type="ordered locus">PMT_0465</name>
</gene>
<comment type="function">
    <text evidence="1">The alpha subunit is responsible for the aldol cleavage of indoleglycerol phosphate to indole and glyceraldehyde 3-phosphate.</text>
</comment>
<comment type="catalytic activity">
    <reaction evidence="1">
        <text>(1S,2R)-1-C-(indol-3-yl)glycerol 3-phosphate + L-serine = D-glyceraldehyde 3-phosphate + L-tryptophan + H2O</text>
        <dbReference type="Rhea" id="RHEA:10532"/>
        <dbReference type="ChEBI" id="CHEBI:15377"/>
        <dbReference type="ChEBI" id="CHEBI:33384"/>
        <dbReference type="ChEBI" id="CHEBI:57912"/>
        <dbReference type="ChEBI" id="CHEBI:58866"/>
        <dbReference type="ChEBI" id="CHEBI:59776"/>
        <dbReference type="EC" id="4.2.1.20"/>
    </reaction>
</comment>
<comment type="pathway">
    <text evidence="1">Amino-acid biosynthesis; L-tryptophan biosynthesis; L-tryptophan from chorismate: step 5/5.</text>
</comment>
<comment type="subunit">
    <text evidence="1">Tetramer of two alpha and two beta chains.</text>
</comment>
<comment type="similarity">
    <text evidence="1">Belongs to the TrpA family.</text>
</comment>
<organism>
    <name type="scientific">Prochlorococcus marinus (strain MIT 9313)</name>
    <dbReference type="NCBI Taxonomy" id="74547"/>
    <lineage>
        <taxon>Bacteria</taxon>
        <taxon>Bacillati</taxon>
        <taxon>Cyanobacteriota</taxon>
        <taxon>Cyanophyceae</taxon>
        <taxon>Synechococcales</taxon>
        <taxon>Prochlorococcaceae</taxon>
        <taxon>Prochlorococcus</taxon>
    </lineage>
</organism>
<proteinExistence type="inferred from homology"/>
<sequence length="275" mass="28958">MADFLAPKSNTHATISSRFQRVQAEGRLALMPFLMAGDPDLETTAEVLLSLEQSGADMIELGIPYSDPLADGPVIQAAASRALASGTTPARVLQMLIDLRGKLSIPVILFTYTNPLFNRGMERFCDEAAEAGVAGLVVPDLPLEEAERLSPLASARGLDLVLLVAPTTPAERMARIAESSRGFTYLVSVTGVTGERSVMEDRVQSLVQQLKLSGSNPVAVGFGISGPQQVRQVRSWGADGAIVGSALVKRMAAAAPGLVAQEAGLFCKELRNAAG</sequence>
<feature type="chain" id="PRO_0000098823" description="Tryptophan synthase alpha chain">
    <location>
        <begin position="1"/>
        <end position="275"/>
    </location>
</feature>
<feature type="active site" description="Proton acceptor" evidence="1">
    <location>
        <position position="60"/>
    </location>
</feature>
<feature type="active site" description="Proton acceptor" evidence="1">
    <location>
        <position position="71"/>
    </location>
</feature>
<protein>
    <recommendedName>
        <fullName evidence="1">Tryptophan synthase alpha chain</fullName>
        <ecNumber evidence="1">4.2.1.20</ecNumber>
    </recommendedName>
</protein>